<reference key="1">
    <citation type="journal article" date="2007" name="PLoS Genet.">
        <title>A tale of two oxidation states: bacterial colonization of arsenic-rich environments.</title>
        <authorList>
            <person name="Muller D."/>
            <person name="Medigue C."/>
            <person name="Koechler S."/>
            <person name="Barbe V."/>
            <person name="Barakat M."/>
            <person name="Talla E."/>
            <person name="Bonnefoy V."/>
            <person name="Krin E."/>
            <person name="Arsene-Ploetze F."/>
            <person name="Carapito C."/>
            <person name="Chandler M."/>
            <person name="Cournoyer B."/>
            <person name="Cruveiller S."/>
            <person name="Dossat C."/>
            <person name="Duval S."/>
            <person name="Heymann M."/>
            <person name="Leize E."/>
            <person name="Lieutaud A."/>
            <person name="Lievremont D."/>
            <person name="Makita Y."/>
            <person name="Mangenot S."/>
            <person name="Nitschke W."/>
            <person name="Ortet P."/>
            <person name="Perdrial N."/>
            <person name="Schoepp B."/>
            <person name="Siguier P."/>
            <person name="Simeonova D.D."/>
            <person name="Rouy Z."/>
            <person name="Segurens B."/>
            <person name="Turlin E."/>
            <person name="Vallenet D."/>
            <person name="van Dorsselaer A."/>
            <person name="Weiss S."/>
            <person name="Weissenbach J."/>
            <person name="Lett M.-C."/>
            <person name="Danchin A."/>
            <person name="Bertin P.N."/>
        </authorList>
    </citation>
    <scope>NUCLEOTIDE SEQUENCE [LARGE SCALE GENOMIC DNA]</scope>
    <source>
        <strain>ULPAs1</strain>
    </source>
</reference>
<proteinExistence type="inferred from homology"/>
<protein>
    <recommendedName>
        <fullName evidence="1">Regulatory protein RecX</fullName>
    </recommendedName>
</protein>
<comment type="function">
    <text evidence="1">Modulates RecA activity.</text>
</comment>
<comment type="subcellular location">
    <subcellularLocation>
        <location evidence="1">Cytoplasm</location>
    </subcellularLocation>
</comment>
<comment type="similarity">
    <text evidence="1">Belongs to the RecX family.</text>
</comment>
<evidence type="ECO:0000255" key="1">
    <source>
        <dbReference type="HAMAP-Rule" id="MF_01114"/>
    </source>
</evidence>
<sequence>MAKLQVSLKARALRYLSAREHSRQELARKLARYAQEGDDIEALLDTLEAANFMSEARFSESLVNRRAARFGNSRILSELKSHNIDPDSLTEIKAALAQDEVARAREVWTRKFGVAASDANGRAKQMRFLLQRGFSHRAIQAAMRAKEENED</sequence>
<keyword id="KW-0963">Cytoplasm</keyword>
<keyword id="KW-1185">Reference proteome</keyword>
<organism>
    <name type="scientific">Herminiimonas arsenicoxydans</name>
    <dbReference type="NCBI Taxonomy" id="204773"/>
    <lineage>
        <taxon>Bacteria</taxon>
        <taxon>Pseudomonadati</taxon>
        <taxon>Pseudomonadota</taxon>
        <taxon>Betaproteobacteria</taxon>
        <taxon>Burkholderiales</taxon>
        <taxon>Oxalobacteraceae</taxon>
        <taxon>Herminiimonas</taxon>
    </lineage>
</organism>
<accession>A4G8B2</accession>
<feature type="chain" id="PRO_1000137170" description="Regulatory protein RecX">
    <location>
        <begin position="1"/>
        <end position="151"/>
    </location>
</feature>
<name>RECX_HERAR</name>
<dbReference type="EMBL" id="CU207211">
    <property type="protein sequence ID" value="CAL62749.1"/>
    <property type="molecule type" value="Genomic_DNA"/>
</dbReference>
<dbReference type="SMR" id="A4G8B2"/>
<dbReference type="STRING" id="204773.HEAR2627"/>
<dbReference type="KEGG" id="har:HEAR2627"/>
<dbReference type="eggNOG" id="COG2137">
    <property type="taxonomic scope" value="Bacteria"/>
</dbReference>
<dbReference type="HOGENOM" id="CLU_066607_3_1_4"/>
<dbReference type="OrthoDB" id="5295441at2"/>
<dbReference type="Proteomes" id="UP000006697">
    <property type="component" value="Chromosome"/>
</dbReference>
<dbReference type="GO" id="GO:0005737">
    <property type="term" value="C:cytoplasm"/>
    <property type="evidence" value="ECO:0007669"/>
    <property type="project" value="UniProtKB-SubCell"/>
</dbReference>
<dbReference type="GO" id="GO:0006282">
    <property type="term" value="P:regulation of DNA repair"/>
    <property type="evidence" value="ECO:0007669"/>
    <property type="project" value="UniProtKB-UniRule"/>
</dbReference>
<dbReference type="Gene3D" id="1.10.10.10">
    <property type="entry name" value="Winged helix-like DNA-binding domain superfamily/Winged helix DNA-binding domain"/>
    <property type="match status" value="2"/>
</dbReference>
<dbReference type="HAMAP" id="MF_01114">
    <property type="entry name" value="RecX"/>
    <property type="match status" value="1"/>
</dbReference>
<dbReference type="InterPro" id="IPR053926">
    <property type="entry name" value="RecX_HTH_1st"/>
</dbReference>
<dbReference type="InterPro" id="IPR053925">
    <property type="entry name" value="RecX_HTH_3rd"/>
</dbReference>
<dbReference type="InterPro" id="IPR003783">
    <property type="entry name" value="Regulatory_RecX"/>
</dbReference>
<dbReference type="InterPro" id="IPR036388">
    <property type="entry name" value="WH-like_DNA-bd_sf"/>
</dbReference>
<dbReference type="NCBIfam" id="NF001055">
    <property type="entry name" value="PRK00117.2-5"/>
    <property type="match status" value="1"/>
</dbReference>
<dbReference type="PANTHER" id="PTHR33602">
    <property type="entry name" value="REGULATORY PROTEIN RECX FAMILY PROTEIN"/>
    <property type="match status" value="1"/>
</dbReference>
<dbReference type="PANTHER" id="PTHR33602:SF1">
    <property type="entry name" value="REGULATORY PROTEIN RECX FAMILY PROTEIN"/>
    <property type="match status" value="1"/>
</dbReference>
<dbReference type="Pfam" id="PF21982">
    <property type="entry name" value="RecX_HTH1"/>
    <property type="match status" value="1"/>
</dbReference>
<dbReference type="Pfam" id="PF21981">
    <property type="entry name" value="RecX_HTH3"/>
    <property type="match status" value="1"/>
</dbReference>
<gene>
    <name evidence="1" type="primary">recX</name>
    <name type="ordered locus">HEAR2627</name>
</gene>